<dbReference type="EMBL" id="BA000031">
    <property type="protein sequence ID" value="BAC60691.1"/>
    <property type="molecule type" value="Genomic_DNA"/>
</dbReference>
<dbReference type="RefSeq" id="NP_798807.1">
    <property type="nucleotide sequence ID" value="NC_004603.1"/>
</dbReference>
<dbReference type="SMR" id="Q87M30"/>
<dbReference type="GeneID" id="1189941"/>
<dbReference type="KEGG" id="vpa:VP2428"/>
<dbReference type="PATRIC" id="fig|223926.6.peg.2329"/>
<dbReference type="eggNOG" id="COG0480">
    <property type="taxonomic scope" value="Bacteria"/>
</dbReference>
<dbReference type="HOGENOM" id="CLU_002794_4_1_6"/>
<dbReference type="Proteomes" id="UP000002493">
    <property type="component" value="Chromosome 1"/>
</dbReference>
<dbReference type="GO" id="GO:0005737">
    <property type="term" value="C:cytoplasm"/>
    <property type="evidence" value="ECO:0007669"/>
    <property type="project" value="UniProtKB-SubCell"/>
</dbReference>
<dbReference type="GO" id="GO:0005525">
    <property type="term" value="F:GTP binding"/>
    <property type="evidence" value="ECO:0007669"/>
    <property type="project" value="UniProtKB-UniRule"/>
</dbReference>
<dbReference type="GO" id="GO:0003924">
    <property type="term" value="F:GTPase activity"/>
    <property type="evidence" value="ECO:0007669"/>
    <property type="project" value="InterPro"/>
</dbReference>
<dbReference type="GO" id="GO:0097216">
    <property type="term" value="F:guanosine tetraphosphate binding"/>
    <property type="evidence" value="ECO:0007669"/>
    <property type="project" value="UniProtKB-ARBA"/>
</dbReference>
<dbReference type="GO" id="GO:0003746">
    <property type="term" value="F:translation elongation factor activity"/>
    <property type="evidence" value="ECO:0007669"/>
    <property type="project" value="UniProtKB-UniRule"/>
</dbReference>
<dbReference type="GO" id="GO:0032790">
    <property type="term" value="P:ribosome disassembly"/>
    <property type="evidence" value="ECO:0007669"/>
    <property type="project" value="TreeGrafter"/>
</dbReference>
<dbReference type="CDD" id="cd01886">
    <property type="entry name" value="EF-G"/>
    <property type="match status" value="1"/>
</dbReference>
<dbReference type="CDD" id="cd16262">
    <property type="entry name" value="EFG_III"/>
    <property type="match status" value="1"/>
</dbReference>
<dbReference type="CDD" id="cd01434">
    <property type="entry name" value="EFG_mtEFG1_IV"/>
    <property type="match status" value="1"/>
</dbReference>
<dbReference type="CDD" id="cd03713">
    <property type="entry name" value="EFG_mtEFG_C"/>
    <property type="match status" value="1"/>
</dbReference>
<dbReference type="CDD" id="cd04088">
    <property type="entry name" value="EFG_mtEFG_II"/>
    <property type="match status" value="1"/>
</dbReference>
<dbReference type="FunFam" id="2.40.30.10:FF:000006">
    <property type="entry name" value="Elongation factor G"/>
    <property type="match status" value="1"/>
</dbReference>
<dbReference type="FunFam" id="3.30.230.10:FF:000003">
    <property type="entry name" value="Elongation factor G"/>
    <property type="match status" value="1"/>
</dbReference>
<dbReference type="FunFam" id="3.30.70.240:FF:000001">
    <property type="entry name" value="Elongation factor G"/>
    <property type="match status" value="1"/>
</dbReference>
<dbReference type="FunFam" id="3.30.70.870:FF:000006">
    <property type="entry name" value="Elongation factor G"/>
    <property type="match status" value="1"/>
</dbReference>
<dbReference type="FunFam" id="3.40.50.300:FF:000029">
    <property type="entry name" value="Elongation factor G"/>
    <property type="match status" value="1"/>
</dbReference>
<dbReference type="Gene3D" id="3.30.230.10">
    <property type="match status" value="1"/>
</dbReference>
<dbReference type="Gene3D" id="3.30.70.240">
    <property type="match status" value="1"/>
</dbReference>
<dbReference type="Gene3D" id="3.30.70.870">
    <property type="entry name" value="Elongation Factor G (Translational Gtpase), domain 3"/>
    <property type="match status" value="1"/>
</dbReference>
<dbReference type="Gene3D" id="3.40.50.300">
    <property type="entry name" value="P-loop containing nucleotide triphosphate hydrolases"/>
    <property type="match status" value="1"/>
</dbReference>
<dbReference type="Gene3D" id="2.40.30.10">
    <property type="entry name" value="Translation factors"/>
    <property type="match status" value="1"/>
</dbReference>
<dbReference type="HAMAP" id="MF_00054_B">
    <property type="entry name" value="EF_G_EF_2_B"/>
    <property type="match status" value="1"/>
</dbReference>
<dbReference type="InterPro" id="IPR041095">
    <property type="entry name" value="EFG_II"/>
</dbReference>
<dbReference type="InterPro" id="IPR009022">
    <property type="entry name" value="EFG_III"/>
</dbReference>
<dbReference type="InterPro" id="IPR035647">
    <property type="entry name" value="EFG_III/V"/>
</dbReference>
<dbReference type="InterPro" id="IPR047872">
    <property type="entry name" value="EFG_IV"/>
</dbReference>
<dbReference type="InterPro" id="IPR035649">
    <property type="entry name" value="EFG_V"/>
</dbReference>
<dbReference type="InterPro" id="IPR000640">
    <property type="entry name" value="EFG_V-like"/>
</dbReference>
<dbReference type="InterPro" id="IPR004161">
    <property type="entry name" value="EFTu-like_2"/>
</dbReference>
<dbReference type="InterPro" id="IPR031157">
    <property type="entry name" value="G_TR_CS"/>
</dbReference>
<dbReference type="InterPro" id="IPR027417">
    <property type="entry name" value="P-loop_NTPase"/>
</dbReference>
<dbReference type="InterPro" id="IPR020568">
    <property type="entry name" value="Ribosomal_Su5_D2-typ_SF"/>
</dbReference>
<dbReference type="InterPro" id="IPR014721">
    <property type="entry name" value="Ribsml_uS5_D2-typ_fold_subgr"/>
</dbReference>
<dbReference type="InterPro" id="IPR005225">
    <property type="entry name" value="Small_GTP-bd"/>
</dbReference>
<dbReference type="InterPro" id="IPR000795">
    <property type="entry name" value="T_Tr_GTP-bd_dom"/>
</dbReference>
<dbReference type="InterPro" id="IPR009000">
    <property type="entry name" value="Transl_B-barrel_sf"/>
</dbReference>
<dbReference type="InterPro" id="IPR004540">
    <property type="entry name" value="Transl_elong_EFG/EF2"/>
</dbReference>
<dbReference type="InterPro" id="IPR005517">
    <property type="entry name" value="Transl_elong_EFG/EF2_IV"/>
</dbReference>
<dbReference type="NCBIfam" id="TIGR00484">
    <property type="entry name" value="EF-G"/>
    <property type="match status" value="1"/>
</dbReference>
<dbReference type="NCBIfam" id="NF009381">
    <property type="entry name" value="PRK12740.1-5"/>
    <property type="match status" value="1"/>
</dbReference>
<dbReference type="NCBIfam" id="TIGR00231">
    <property type="entry name" value="small_GTP"/>
    <property type="match status" value="1"/>
</dbReference>
<dbReference type="PANTHER" id="PTHR43261:SF5">
    <property type="entry name" value="ELONGATION FACTOR G 1"/>
    <property type="match status" value="1"/>
</dbReference>
<dbReference type="PANTHER" id="PTHR43261">
    <property type="entry name" value="TRANSLATION ELONGATION FACTOR G-RELATED"/>
    <property type="match status" value="1"/>
</dbReference>
<dbReference type="Pfam" id="PF00679">
    <property type="entry name" value="EFG_C"/>
    <property type="match status" value="1"/>
</dbReference>
<dbReference type="Pfam" id="PF14492">
    <property type="entry name" value="EFG_III"/>
    <property type="match status" value="1"/>
</dbReference>
<dbReference type="Pfam" id="PF03764">
    <property type="entry name" value="EFG_IV"/>
    <property type="match status" value="1"/>
</dbReference>
<dbReference type="Pfam" id="PF00009">
    <property type="entry name" value="GTP_EFTU"/>
    <property type="match status" value="1"/>
</dbReference>
<dbReference type="Pfam" id="PF03144">
    <property type="entry name" value="GTP_EFTU_D2"/>
    <property type="match status" value="1"/>
</dbReference>
<dbReference type="PRINTS" id="PR00315">
    <property type="entry name" value="ELONGATNFCT"/>
</dbReference>
<dbReference type="SMART" id="SM00838">
    <property type="entry name" value="EFG_C"/>
    <property type="match status" value="1"/>
</dbReference>
<dbReference type="SMART" id="SM00889">
    <property type="entry name" value="EFG_IV"/>
    <property type="match status" value="1"/>
</dbReference>
<dbReference type="SUPFAM" id="SSF54980">
    <property type="entry name" value="EF-G C-terminal domain-like"/>
    <property type="match status" value="2"/>
</dbReference>
<dbReference type="SUPFAM" id="SSF52540">
    <property type="entry name" value="P-loop containing nucleoside triphosphate hydrolases"/>
    <property type="match status" value="1"/>
</dbReference>
<dbReference type="SUPFAM" id="SSF54211">
    <property type="entry name" value="Ribosomal protein S5 domain 2-like"/>
    <property type="match status" value="1"/>
</dbReference>
<dbReference type="SUPFAM" id="SSF50447">
    <property type="entry name" value="Translation proteins"/>
    <property type="match status" value="1"/>
</dbReference>
<dbReference type="PROSITE" id="PS00301">
    <property type="entry name" value="G_TR_1"/>
    <property type="match status" value="1"/>
</dbReference>
<dbReference type="PROSITE" id="PS51722">
    <property type="entry name" value="G_TR_2"/>
    <property type="match status" value="1"/>
</dbReference>
<feature type="chain" id="PRO_0000091262" description="Elongation factor G 2">
    <location>
        <begin position="1"/>
        <end position="696"/>
    </location>
</feature>
<feature type="domain" description="tr-type G">
    <location>
        <begin position="5"/>
        <end position="281"/>
    </location>
</feature>
<feature type="binding site" evidence="1">
    <location>
        <begin position="14"/>
        <end position="21"/>
    </location>
    <ligand>
        <name>GTP</name>
        <dbReference type="ChEBI" id="CHEBI:37565"/>
    </ligand>
</feature>
<feature type="binding site" evidence="1">
    <location>
        <begin position="78"/>
        <end position="82"/>
    </location>
    <ligand>
        <name>GTP</name>
        <dbReference type="ChEBI" id="CHEBI:37565"/>
    </ligand>
</feature>
<feature type="binding site" evidence="1">
    <location>
        <begin position="132"/>
        <end position="135"/>
    </location>
    <ligand>
        <name>GTP</name>
        <dbReference type="ChEBI" id="CHEBI:37565"/>
    </ligand>
</feature>
<organism>
    <name type="scientific">Vibrio parahaemolyticus serotype O3:K6 (strain RIMD 2210633)</name>
    <dbReference type="NCBI Taxonomy" id="223926"/>
    <lineage>
        <taxon>Bacteria</taxon>
        <taxon>Pseudomonadati</taxon>
        <taxon>Pseudomonadota</taxon>
        <taxon>Gammaproteobacteria</taxon>
        <taxon>Vibrionales</taxon>
        <taxon>Vibrionaceae</taxon>
        <taxon>Vibrio</taxon>
    </lineage>
</organism>
<sequence length="696" mass="76367">MTDLSKYRNIGIFAHVDAGKTTSTERILKLTGKIHKIGDTHDGSTTTDFMEQEAERGITIQSAATTCFWNDHRLNIIDTPGHVDFTIEVYRSLKVLDGGIGVFCGSGGVEPQSETNWRYADESHVSRLIFVNKLDRMGADFYKVVDQVQNVLGATPLVMTLPIGIEEDFVGVVDVLSQQAYVWDESGQPENYEVQEIPADMVDKAAEYREMLIETALEQDEDLMMAYLEEGEEPSVEDIKRCIRKGTRDLAFFPTYCGSAYKNKGMQLILDAVVDYLPSPTEVDPQPLTDPDTGEATGEVATVSADEPLKALAFKIMDDRFGALTFIRIYSGKMKKGDTVLNSATGKTERIGRMVEMHADERNEIDSAQAGDIIAVVGMKNVQTGHTLCDPKHECTLEPMIFPEPVISIAVKPKDKGGSEKMGIAIGKMVAEDPSFQVETDEESGETILKGMGELHLDIKVDILKRTYGVELEVGAPQVAYRETITQAIEDSYTHKKQSGGSGQFAKIDYRIKPGEVGSGFTFKSTVVGGNVPKEFWPAVEKGFAGMMETGVLAGFPTLDVEVELYDGGFHAVDSSAIAYEIAAKGAFRQSMPKAGAQLLEPIMKVDVFTPEDHVGDVIGDLNRRRGMIKDQQAGTTGVRIKGDVPLSEMFGYIGTLRTMTSGRGQFSMEFSHYSPCPNNVAEQVIADVKERNAKK</sequence>
<evidence type="ECO:0000255" key="1">
    <source>
        <dbReference type="HAMAP-Rule" id="MF_00054"/>
    </source>
</evidence>
<keyword id="KW-0963">Cytoplasm</keyword>
<keyword id="KW-0251">Elongation factor</keyword>
<keyword id="KW-0342">GTP-binding</keyword>
<keyword id="KW-0547">Nucleotide-binding</keyword>
<keyword id="KW-0648">Protein biosynthesis</keyword>
<proteinExistence type="inferred from homology"/>
<protein>
    <recommendedName>
        <fullName evidence="1">Elongation factor G 2</fullName>
        <shortName evidence="1">EF-G 2</shortName>
    </recommendedName>
</protein>
<gene>
    <name evidence="1" type="primary">fusA2</name>
    <name type="ordered locus">VP2428</name>
</gene>
<accession>Q87M30</accession>
<name>EFG2_VIBPA</name>
<reference key="1">
    <citation type="journal article" date="2003" name="Lancet">
        <title>Genome sequence of Vibrio parahaemolyticus: a pathogenic mechanism distinct from that of V. cholerae.</title>
        <authorList>
            <person name="Makino K."/>
            <person name="Oshima K."/>
            <person name="Kurokawa K."/>
            <person name="Yokoyama K."/>
            <person name="Uda T."/>
            <person name="Tagomori K."/>
            <person name="Iijima Y."/>
            <person name="Najima M."/>
            <person name="Nakano M."/>
            <person name="Yamashita A."/>
            <person name="Kubota Y."/>
            <person name="Kimura S."/>
            <person name="Yasunaga T."/>
            <person name="Honda T."/>
            <person name="Shinagawa H."/>
            <person name="Hattori M."/>
            <person name="Iida T."/>
        </authorList>
    </citation>
    <scope>NUCLEOTIDE SEQUENCE [LARGE SCALE GENOMIC DNA]</scope>
    <source>
        <strain>RIMD 2210633</strain>
    </source>
</reference>
<comment type="function">
    <text evidence="1">Catalyzes the GTP-dependent ribosomal translocation step during translation elongation. During this step, the ribosome changes from the pre-translocational (PRE) to the post-translocational (POST) state as the newly formed A-site-bound peptidyl-tRNA and P-site-bound deacylated tRNA move to the P and E sites, respectively. Catalyzes the coordinated movement of the two tRNA molecules, the mRNA and conformational changes in the ribosome.</text>
</comment>
<comment type="subcellular location">
    <subcellularLocation>
        <location evidence="1">Cytoplasm</location>
    </subcellularLocation>
</comment>
<comment type="similarity">
    <text evidence="1">Belongs to the TRAFAC class translation factor GTPase superfamily. Classic translation factor GTPase family. EF-G/EF-2 subfamily.</text>
</comment>